<organism>
    <name type="scientific">Homo sapiens</name>
    <name type="common">Human</name>
    <dbReference type="NCBI Taxonomy" id="9606"/>
    <lineage>
        <taxon>Eukaryota</taxon>
        <taxon>Metazoa</taxon>
        <taxon>Chordata</taxon>
        <taxon>Craniata</taxon>
        <taxon>Vertebrata</taxon>
        <taxon>Euteleostomi</taxon>
        <taxon>Mammalia</taxon>
        <taxon>Eutheria</taxon>
        <taxon>Euarchontoglires</taxon>
        <taxon>Primates</taxon>
        <taxon>Haplorrhini</taxon>
        <taxon>Catarrhini</taxon>
        <taxon>Hominidae</taxon>
        <taxon>Homo</taxon>
    </lineage>
</organism>
<name>S39A3_HUMAN</name>
<keyword id="KW-0025">Alternative splicing</keyword>
<keyword id="KW-1003">Cell membrane</keyword>
<keyword id="KW-0406">Ion transport</keyword>
<keyword id="KW-0472">Membrane</keyword>
<keyword id="KW-0597">Phosphoprotein</keyword>
<keyword id="KW-1267">Proteomics identification</keyword>
<keyword id="KW-1185">Reference proteome</keyword>
<keyword id="KW-0812">Transmembrane</keyword>
<keyword id="KW-1133">Transmembrane helix</keyword>
<keyword id="KW-0813">Transport</keyword>
<keyword id="KW-0862">Zinc</keyword>
<keyword id="KW-0864">Zinc transport</keyword>
<feature type="chain" id="PRO_0000312868" description="Zinc transporter ZIP3">
    <location>
        <begin position="1"/>
        <end position="314"/>
    </location>
</feature>
<feature type="topological domain" description="Extracellular" evidence="3">
    <location>
        <begin position="1"/>
        <end position="3"/>
    </location>
</feature>
<feature type="transmembrane region" description="Helical" evidence="3">
    <location>
        <begin position="4"/>
        <end position="24"/>
    </location>
</feature>
<feature type="topological domain" description="Cytoplasmic" evidence="3">
    <location>
        <begin position="25"/>
        <end position="42"/>
    </location>
</feature>
<feature type="transmembrane region" description="Helical" evidence="3">
    <location>
        <begin position="43"/>
        <end position="63"/>
    </location>
</feature>
<feature type="topological domain" description="Extracellular" evidence="3">
    <location>
        <begin position="64"/>
        <end position="85"/>
    </location>
</feature>
<feature type="transmembrane region" description="Helical" evidence="3">
    <location>
        <begin position="86"/>
        <end position="106"/>
    </location>
</feature>
<feature type="topological domain" description="Cytoplasmic" evidence="3">
    <location>
        <begin position="107"/>
        <end position="169"/>
    </location>
</feature>
<feature type="transmembrane region" description="Helical" evidence="3">
    <location>
        <begin position="170"/>
        <end position="190"/>
    </location>
</feature>
<feature type="topological domain" description="Extracellular" evidence="3">
    <location>
        <begin position="191"/>
        <end position="196"/>
    </location>
</feature>
<feature type="transmembrane region" description="Helical" evidence="3">
    <location>
        <begin position="197"/>
        <end position="217"/>
    </location>
</feature>
<feature type="topological domain" description="Cytoplasmic" evidence="3">
    <location>
        <begin position="218"/>
        <end position="229"/>
    </location>
</feature>
<feature type="transmembrane region" description="Helical" evidence="3">
    <location>
        <begin position="230"/>
        <end position="250"/>
    </location>
</feature>
<feature type="topological domain" description="Extracellular" evidence="3">
    <location>
        <begin position="251"/>
        <end position="262"/>
    </location>
</feature>
<feature type="transmembrane region" description="Helical" evidence="3">
    <location>
        <begin position="263"/>
        <end position="283"/>
    </location>
</feature>
<feature type="topological domain" description="Cytoplasmic" evidence="3">
    <location>
        <begin position="284"/>
        <end position="292"/>
    </location>
</feature>
<feature type="transmembrane region" description="Helical" evidence="3">
    <location>
        <begin position="293"/>
        <end position="313"/>
    </location>
</feature>
<feature type="topological domain" description="Extracellular" evidence="3">
    <location>
        <position position="314"/>
    </location>
</feature>
<feature type="modified residue" description="Phosphoserine" evidence="8 9">
    <location>
        <position position="125"/>
    </location>
</feature>
<feature type="modified residue" description="Phosphoserine" evidence="1">
    <location>
        <position position="129"/>
    </location>
</feature>
<feature type="splice variant" id="VSP_029920" description="In isoform 2." evidence="4 5">
    <original>LQKVLSLGHISTDYPLAETILLLGFFMTVFLEQLI</original>
    <variation>VRAPWALAAALGTLWPRDSDAFSTLMPSSVKALML</variation>
    <location>
        <begin position="71"/>
        <end position="105"/>
    </location>
</feature>
<feature type="splice variant" id="VSP_029921" description="In isoform 2." evidence="4 5">
    <location>
        <begin position="106"/>
        <end position="314"/>
    </location>
</feature>
<feature type="sequence variant" id="VAR_037599" description="In dbSNP:rs11539244.">
    <original>F</original>
    <variation>L</variation>
    <location>
        <position position="100"/>
    </location>
</feature>
<feature type="sequence variant" id="VAR_037600" description="In dbSNP:rs35594294.">
    <original>P</original>
    <variation>L</variation>
    <location>
        <position position="257"/>
    </location>
</feature>
<dbReference type="EMBL" id="AK002044">
    <property type="protein sequence ID" value="BAG51005.1"/>
    <property type="molecule type" value="mRNA"/>
</dbReference>
<dbReference type="EMBL" id="BC005869">
    <property type="protein sequence ID" value="AAH05869.2"/>
    <property type="molecule type" value="mRNA"/>
</dbReference>
<dbReference type="EMBL" id="BC020571">
    <property type="protein sequence ID" value="AAH20571.1"/>
    <property type="molecule type" value="mRNA"/>
</dbReference>
<dbReference type="CCDS" id="CCDS12093.1">
    <molecule id="Q9BRY0-1"/>
</dbReference>
<dbReference type="CCDS" id="CCDS45909.1">
    <molecule id="Q9BRY0-2"/>
</dbReference>
<dbReference type="RefSeq" id="NP_653165.2">
    <molecule id="Q9BRY0-1"/>
    <property type="nucleotide sequence ID" value="NM_144564.4"/>
</dbReference>
<dbReference type="RefSeq" id="NP_998733.1">
    <molecule id="Q9BRY0-2"/>
    <property type="nucleotide sequence ID" value="NM_213568.2"/>
</dbReference>
<dbReference type="SMR" id="Q9BRY0"/>
<dbReference type="BioGRID" id="119011">
    <property type="interactions" value="73"/>
</dbReference>
<dbReference type="FunCoup" id="Q9BRY0">
    <property type="interactions" value="359"/>
</dbReference>
<dbReference type="IntAct" id="Q9BRY0">
    <property type="interactions" value="40"/>
</dbReference>
<dbReference type="STRING" id="9606.ENSP00000269740"/>
<dbReference type="DrugBank" id="DB14533">
    <property type="generic name" value="Zinc chloride"/>
</dbReference>
<dbReference type="DrugBank" id="DB14548">
    <property type="generic name" value="Zinc sulfate, unspecified form"/>
</dbReference>
<dbReference type="TCDB" id="2.A.5.3.3">
    <property type="family name" value="the zinc (zn(2+))-iron (fe(2+)) permease (zip) family"/>
</dbReference>
<dbReference type="iPTMnet" id="Q9BRY0"/>
<dbReference type="PhosphoSitePlus" id="Q9BRY0"/>
<dbReference type="BioMuta" id="SLC39A3"/>
<dbReference type="DMDM" id="74732942"/>
<dbReference type="jPOST" id="Q9BRY0"/>
<dbReference type="MassIVE" id="Q9BRY0"/>
<dbReference type="PaxDb" id="9606-ENSP00000269740"/>
<dbReference type="PeptideAtlas" id="Q9BRY0"/>
<dbReference type="ProteomicsDB" id="78852">
    <molecule id="Q9BRY0-1"/>
</dbReference>
<dbReference type="ProteomicsDB" id="78853">
    <molecule id="Q9BRY0-2"/>
</dbReference>
<dbReference type="Pumba" id="Q9BRY0"/>
<dbReference type="Antibodypedia" id="23039">
    <property type="antibodies" value="119 antibodies from 27 providers"/>
</dbReference>
<dbReference type="DNASU" id="29985"/>
<dbReference type="Ensembl" id="ENST00000269740.9">
    <molecule id="Q9BRY0-1"/>
    <property type="protein sequence ID" value="ENSP00000269740.3"/>
    <property type="gene ID" value="ENSG00000141873.11"/>
</dbReference>
<dbReference type="Ensembl" id="ENST00000455372.2">
    <molecule id="Q9BRY0-2"/>
    <property type="protein sequence ID" value="ENSP00000393715.1"/>
    <property type="gene ID" value="ENSG00000141873.11"/>
</dbReference>
<dbReference type="GeneID" id="29985"/>
<dbReference type="KEGG" id="hsa:29985"/>
<dbReference type="MANE-Select" id="ENST00000269740.9">
    <property type="protein sequence ID" value="ENSP00000269740.3"/>
    <property type="RefSeq nucleotide sequence ID" value="NM_144564.5"/>
    <property type="RefSeq protein sequence ID" value="NP_653165.2"/>
</dbReference>
<dbReference type="UCSC" id="uc002lwg.4">
    <molecule id="Q9BRY0-1"/>
    <property type="organism name" value="human"/>
</dbReference>
<dbReference type="AGR" id="HGNC:17128"/>
<dbReference type="CTD" id="29985"/>
<dbReference type="DisGeNET" id="29985"/>
<dbReference type="GeneCards" id="SLC39A3"/>
<dbReference type="HGNC" id="HGNC:17128">
    <property type="gene designation" value="SLC39A3"/>
</dbReference>
<dbReference type="HPA" id="ENSG00000141873">
    <property type="expression patterns" value="Tissue enhanced (testis)"/>
</dbReference>
<dbReference type="MIM" id="612168">
    <property type="type" value="gene"/>
</dbReference>
<dbReference type="neXtProt" id="NX_Q9BRY0"/>
<dbReference type="OpenTargets" id="ENSG00000141873"/>
<dbReference type="PharmGKB" id="PA38203"/>
<dbReference type="VEuPathDB" id="HostDB:ENSG00000141873"/>
<dbReference type="eggNOG" id="KOG1558">
    <property type="taxonomic scope" value="Eukaryota"/>
</dbReference>
<dbReference type="GeneTree" id="ENSGT00940000160231"/>
<dbReference type="HOGENOM" id="CLU_040462_4_1_1"/>
<dbReference type="InParanoid" id="Q9BRY0"/>
<dbReference type="OMA" id="HHHGHFN"/>
<dbReference type="OrthoDB" id="448280at2759"/>
<dbReference type="PAN-GO" id="Q9BRY0">
    <property type="GO annotations" value="3 GO annotations based on evolutionary models"/>
</dbReference>
<dbReference type="PhylomeDB" id="Q9BRY0"/>
<dbReference type="TreeFam" id="TF317098"/>
<dbReference type="PathwayCommons" id="Q9BRY0"/>
<dbReference type="Reactome" id="R-HSA-442380">
    <property type="pathway name" value="Zinc influx into cells by the SLC39 gene family"/>
</dbReference>
<dbReference type="SignaLink" id="Q9BRY0"/>
<dbReference type="BioGRID-ORCS" id="29985">
    <property type="hits" value="11 hits in 1152 CRISPR screens"/>
</dbReference>
<dbReference type="ChiTaRS" id="SLC39A3">
    <property type="organism name" value="human"/>
</dbReference>
<dbReference type="GeneWiki" id="SLC39A3"/>
<dbReference type="GenomeRNAi" id="29985"/>
<dbReference type="Pharos" id="Q9BRY0">
    <property type="development level" value="Tbio"/>
</dbReference>
<dbReference type="PRO" id="PR:Q9BRY0"/>
<dbReference type="Proteomes" id="UP000005640">
    <property type="component" value="Chromosome 19"/>
</dbReference>
<dbReference type="RNAct" id="Q9BRY0">
    <property type="molecule type" value="protein"/>
</dbReference>
<dbReference type="Bgee" id="ENSG00000141873">
    <property type="expression patterns" value="Expressed in left testis and 143 other cell types or tissues"/>
</dbReference>
<dbReference type="ExpressionAtlas" id="Q9BRY0">
    <property type="expression patterns" value="baseline and differential"/>
</dbReference>
<dbReference type="GO" id="GO:0016324">
    <property type="term" value="C:apical plasma membrane"/>
    <property type="evidence" value="ECO:0007669"/>
    <property type="project" value="UniProtKB-SubCell"/>
</dbReference>
<dbReference type="GO" id="GO:0098686">
    <property type="term" value="C:hippocampal mossy fiber to CA3 synapse"/>
    <property type="evidence" value="ECO:0000250"/>
    <property type="project" value="UniProtKB"/>
</dbReference>
<dbReference type="GO" id="GO:0005886">
    <property type="term" value="C:plasma membrane"/>
    <property type="evidence" value="ECO:0000250"/>
    <property type="project" value="UniProtKB"/>
</dbReference>
<dbReference type="GO" id="GO:0005385">
    <property type="term" value="F:zinc ion transmembrane transporter activity"/>
    <property type="evidence" value="ECO:0000250"/>
    <property type="project" value="UniProtKB"/>
</dbReference>
<dbReference type="GO" id="GO:0000902">
    <property type="term" value="P:cell morphogenesis"/>
    <property type="evidence" value="ECO:0007669"/>
    <property type="project" value="Ensembl"/>
</dbReference>
<dbReference type="GO" id="GO:0048701">
    <property type="term" value="P:embryonic cranial skeleton morphogenesis"/>
    <property type="evidence" value="ECO:0007669"/>
    <property type="project" value="Ensembl"/>
</dbReference>
<dbReference type="GO" id="GO:0001701">
    <property type="term" value="P:in utero embryonic development"/>
    <property type="evidence" value="ECO:0007669"/>
    <property type="project" value="Ensembl"/>
</dbReference>
<dbReference type="GO" id="GO:0060173">
    <property type="term" value="P:limb development"/>
    <property type="evidence" value="ECO:0007669"/>
    <property type="project" value="Ensembl"/>
</dbReference>
<dbReference type="GO" id="GO:0043029">
    <property type="term" value="P:T cell homeostasis"/>
    <property type="evidence" value="ECO:0007669"/>
    <property type="project" value="Ensembl"/>
</dbReference>
<dbReference type="GO" id="GO:0071577">
    <property type="term" value="P:zinc ion transmembrane transport"/>
    <property type="evidence" value="ECO:0000250"/>
    <property type="project" value="UniProtKB"/>
</dbReference>
<dbReference type="InterPro" id="IPR003689">
    <property type="entry name" value="ZIP"/>
</dbReference>
<dbReference type="PANTHER" id="PTHR11040:SF221">
    <property type="entry name" value="ZINC TRANSPORTER ZIP3"/>
    <property type="match status" value="1"/>
</dbReference>
<dbReference type="PANTHER" id="PTHR11040">
    <property type="entry name" value="ZINC/IRON TRANSPORTER"/>
    <property type="match status" value="1"/>
</dbReference>
<dbReference type="Pfam" id="PF02535">
    <property type="entry name" value="Zip"/>
    <property type="match status" value="1"/>
</dbReference>
<evidence type="ECO:0000250" key="1">
    <source>
        <dbReference type="UniProtKB" id="Q5U1X7"/>
    </source>
</evidence>
<evidence type="ECO:0000250" key="2">
    <source>
        <dbReference type="UniProtKB" id="Q99K24"/>
    </source>
</evidence>
<evidence type="ECO:0000255" key="3"/>
<evidence type="ECO:0000303" key="4">
    <source>
    </source>
</evidence>
<evidence type="ECO:0000303" key="5">
    <source>
    </source>
</evidence>
<evidence type="ECO:0000305" key="6"/>
<evidence type="ECO:0000312" key="7">
    <source>
        <dbReference type="HGNC" id="HGNC:17128"/>
    </source>
</evidence>
<evidence type="ECO:0007744" key="8">
    <source>
    </source>
</evidence>
<evidence type="ECO:0007744" key="9">
    <source>
    </source>
</evidence>
<protein>
    <recommendedName>
        <fullName>Zinc transporter ZIP3</fullName>
    </recommendedName>
    <alternativeName>
        <fullName>Solute carrier family 39 member 3</fullName>
    </alternativeName>
    <alternativeName>
        <fullName>Zrt- and Irt-like protein 3</fullName>
        <shortName>ZIP-3</shortName>
    </alternativeName>
</protein>
<proteinExistence type="evidence at protein level"/>
<comment type="function">
    <text evidence="2">Transporter for the divalent cation Zn(2+). Mediates the influx of Zn(2+) into cells from extracellular space. Controls Zn(2+) accumulation into dentate gyrus granule cells in the hippocampus. Mediates Zn(2+) reuptake from the secreted milk within the alveolar lumen.</text>
</comment>
<comment type="catalytic activity">
    <reaction evidence="2">
        <text>Zn(2+)(in) = Zn(2+)(out)</text>
        <dbReference type="Rhea" id="RHEA:29351"/>
        <dbReference type="ChEBI" id="CHEBI:29105"/>
    </reaction>
    <physiologicalReaction direction="left-to-right" evidence="2">
        <dbReference type="Rhea" id="RHEA:29352"/>
    </physiologicalReaction>
</comment>
<comment type="interaction">
    <interactant intactId="EBI-17714201">
        <id>Q9BRY0-2</id>
    </interactant>
    <interactant intactId="EBI-751204">
        <id>Q9BWQ6</id>
        <label>YIPF2</label>
    </interactant>
    <organismsDiffer>false</organismsDiffer>
    <experiments>3</experiments>
</comment>
<comment type="subcellular location">
    <subcellularLocation>
        <location evidence="2">Cell membrane</location>
        <topology evidence="3">Multi-pass membrane protein</topology>
    </subcellularLocation>
    <subcellularLocation>
        <location evidence="2">Apical cell membrane</location>
        <topology evidence="3">Multi-pass membrane protein</topology>
    </subcellularLocation>
    <text evidence="2">Localized primarily at the cell surface but also found in a perinuclear compartment in HC11 cells. In mammary epithelial cell, localized primary to the apical membrane.</text>
</comment>
<comment type="alternative products">
    <event type="alternative splicing"/>
    <isoform>
        <id>Q9BRY0-1</id>
        <name>1</name>
        <sequence type="displayed"/>
    </isoform>
    <isoform>
        <id>Q9BRY0-2</id>
        <name>2</name>
        <sequence type="described" ref="VSP_029920 VSP_029921"/>
    </isoform>
</comment>
<comment type="similarity">
    <text evidence="6">Belongs to the ZIP transporter (TC 2.A.5) family.</text>
</comment>
<gene>
    <name evidence="7" type="primary">SLC39A3</name>
    <name type="synonym">ZIP3</name>
</gene>
<reference key="1">
    <citation type="journal article" date="2004" name="Nat. Genet.">
        <title>Complete sequencing and characterization of 21,243 full-length human cDNAs.</title>
        <authorList>
            <person name="Ota T."/>
            <person name="Suzuki Y."/>
            <person name="Nishikawa T."/>
            <person name="Otsuki T."/>
            <person name="Sugiyama T."/>
            <person name="Irie R."/>
            <person name="Wakamatsu A."/>
            <person name="Hayashi K."/>
            <person name="Sato H."/>
            <person name="Nagai K."/>
            <person name="Kimura K."/>
            <person name="Makita H."/>
            <person name="Sekine M."/>
            <person name="Obayashi M."/>
            <person name="Nishi T."/>
            <person name="Shibahara T."/>
            <person name="Tanaka T."/>
            <person name="Ishii S."/>
            <person name="Yamamoto J."/>
            <person name="Saito K."/>
            <person name="Kawai Y."/>
            <person name="Isono Y."/>
            <person name="Nakamura Y."/>
            <person name="Nagahari K."/>
            <person name="Murakami K."/>
            <person name="Yasuda T."/>
            <person name="Iwayanagi T."/>
            <person name="Wagatsuma M."/>
            <person name="Shiratori A."/>
            <person name="Sudo H."/>
            <person name="Hosoiri T."/>
            <person name="Kaku Y."/>
            <person name="Kodaira H."/>
            <person name="Kondo H."/>
            <person name="Sugawara M."/>
            <person name="Takahashi M."/>
            <person name="Kanda K."/>
            <person name="Yokoi T."/>
            <person name="Furuya T."/>
            <person name="Kikkawa E."/>
            <person name="Omura Y."/>
            <person name="Abe K."/>
            <person name="Kamihara K."/>
            <person name="Katsuta N."/>
            <person name="Sato K."/>
            <person name="Tanikawa M."/>
            <person name="Yamazaki M."/>
            <person name="Ninomiya K."/>
            <person name="Ishibashi T."/>
            <person name="Yamashita H."/>
            <person name="Murakawa K."/>
            <person name="Fujimori K."/>
            <person name="Tanai H."/>
            <person name="Kimata M."/>
            <person name="Watanabe M."/>
            <person name="Hiraoka S."/>
            <person name="Chiba Y."/>
            <person name="Ishida S."/>
            <person name="Ono Y."/>
            <person name="Takiguchi S."/>
            <person name="Watanabe S."/>
            <person name="Yosida M."/>
            <person name="Hotuta T."/>
            <person name="Kusano J."/>
            <person name="Kanehori K."/>
            <person name="Takahashi-Fujii A."/>
            <person name="Hara H."/>
            <person name="Tanase T.-O."/>
            <person name="Nomura Y."/>
            <person name="Togiya S."/>
            <person name="Komai F."/>
            <person name="Hara R."/>
            <person name="Takeuchi K."/>
            <person name="Arita M."/>
            <person name="Imose N."/>
            <person name="Musashino K."/>
            <person name="Yuuki H."/>
            <person name="Oshima A."/>
            <person name="Sasaki N."/>
            <person name="Aotsuka S."/>
            <person name="Yoshikawa Y."/>
            <person name="Matsunawa H."/>
            <person name="Ichihara T."/>
            <person name="Shiohata N."/>
            <person name="Sano S."/>
            <person name="Moriya S."/>
            <person name="Momiyama H."/>
            <person name="Satoh N."/>
            <person name="Takami S."/>
            <person name="Terashima Y."/>
            <person name="Suzuki O."/>
            <person name="Nakagawa S."/>
            <person name="Senoh A."/>
            <person name="Mizoguchi H."/>
            <person name="Goto Y."/>
            <person name="Shimizu F."/>
            <person name="Wakebe H."/>
            <person name="Hishigaki H."/>
            <person name="Watanabe T."/>
            <person name="Sugiyama A."/>
            <person name="Takemoto M."/>
            <person name="Kawakami B."/>
            <person name="Yamazaki M."/>
            <person name="Watanabe K."/>
            <person name="Kumagai A."/>
            <person name="Itakura S."/>
            <person name="Fukuzumi Y."/>
            <person name="Fujimori Y."/>
            <person name="Komiyama M."/>
            <person name="Tashiro H."/>
            <person name="Tanigami A."/>
            <person name="Fujiwara T."/>
            <person name="Ono T."/>
            <person name="Yamada K."/>
            <person name="Fujii Y."/>
            <person name="Ozaki K."/>
            <person name="Hirao M."/>
            <person name="Ohmori Y."/>
            <person name="Kawabata A."/>
            <person name="Hikiji T."/>
            <person name="Kobatake N."/>
            <person name="Inagaki H."/>
            <person name="Ikema Y."/>
            <person name="Okamoto S."/>
            <person name="Okitani R."/>
            <person name="Kawakami T."/>
            <person name="Noguchi S."/>
            <person name="Itoh T."/>
            <person name="Shigeta K."/>
            <person name="Senba T."/>
            <person name="Matsumura K."/>
            <person name="Nakajima Y."/>
            <person name="Mizuno T."/>
            <person name="Morinaga M."/>
            <person name="Sasaki M."/>
            <person name="Togashi T."/>
            <person name="Oyama M."/>
            <person name="Hata H."/>
            <person name="Watanabe M."/>
            <person name="Komatsu T."/>
            <person name="Mizushima-Sugano J."/>
            <person name="Satoh T."/>
            <person name="Shirai Y."/>
            <person name="Takahashi Y."/>
            <person name="Nakagawa K."/>
            <person name="Okumura K."/>
            <person name="Nagase T."/>
            <person name="Nomura N."/>
            <person name="Kikuchi H."/>
            <person name="Masuho Y."/>
            <person name="Yamashita R."/>
            <person name="Nakai K."/>
            <person name="Yada T."/>
            <person name="Nakamura Y."/>
            <person name="Ohara O."/>
            <person name="Isogai T."/>
            <person name="Sugano S."/>
        </authorList>
    </citation>
    <scope>NUCLEOTIDE SEQUENCE [LARGE SCALE MRNA] (ISOFORM 2)</scope>
    <source>
        <tissue>Placenta</tissue>
    </source>
</reference>
<reference key="2">
    <citation type="journal article" date="2004" name="Genome Res.">
        <title>The status, quality, and expansion of the NIH full-length cDNA project: the Mammalian Gene Collection (MGC).</title>
        <authorList>
            <consortium name="The MGC Project Team"/>
        </authorList>
    </citation>
    <scope>NUCLEOTIDE SEQUENCE [LARGE SCALE MRNA] (ISOFORMS 1 AND 2)</scope>
    <source>
        <tissue>Duodenum</tissue>
        <tissue>Lymph</tissue>
    </source>
</reference>
<reference key="3">
    <citation type="journal article" date="2008" name="Mol. Cell">
        <title>Kinase-selective enrichment enables quantitative phosphoproteomics of the kinome across the cell cycle.</title>
        <authorList>
            <person name="Daub H."/>
            <person name="Olsen J.V."/>
            <person name="Bairlein M."/>
            <person name="Gnad F."/>
            <person name="Oppermann F.S."/>
            <person name="Korner R."/>
            <person name="Greff Z."/>
            <person name="Keri G."/>
            <person name="Stemmann O."/>
            <person name="Mann M."/>
        </authorList>
    </citation>
    <scope>PHOSPHORYLATION [LARGE SCALE ANALYSIS] AT SER-125</scope>
    <scope>IDENTIFICATION BY MASS SPECTROMETRY [LARGE SCALE ANALYSIS]</scope>
    <source>
        <tissue>Cervix carcinoma</tissue>
    </source>
</reference>
<reference key="4">
    <citation type="journal article" date="2008" name="Proc. Natl. Acad. Sci. U.S.A.">
        <title>A quantitative atlas of mitotic phosphorylation.</title>
        <authorList>
            <person name="Dephoure N."/>
            <person name="Zhou C."/>
            <person name="Villen J."/>
            <person name="Beausoleil S.A."/>
            <person name="Bakalarski C.E."/>
            <person name="Elledge S.J."/>
            <person name="Gygi S.P."/>
        </authorList>
    </citation>
    <scope>PHOSPHORYLATION [LARGE SCALE ANALYSIS] AT SER-125</scope>
    <scope>IDENTIFICATION BY MASS SPECTROMETRY [LARGE SCALE ANALYSIS]</scope>
    <source>
        <tissue>Cervix carcinoma</tissue>
    </source>
</reference>
<reference key="5">
    <citation type="journal article" date="2009" name="Sci. Signal.">
        <title>Quantitative phosphoproteomic analysis of T cell receptor signaling reveals system-wide modulation of protein-protein interactions.</title>
        <authorList>
            <person name="Mayya V."/>
            <person name="Lundgren D.H."/>
            <person name="Hwang S.-I."/>
            <person name="Rezaul K."/>
            <person name="Wu L."/>
            <person name="Eng J.K."/>
            <person name="Rodionov V."/>
            <person name="Han D.K."/>
        </authorList>
    </citation>
    <scope>IDENTIFICATION BY MASS SPECTROMETRY [LARGE SCALE ANALYSIS]</scope>
    <source>
        <tissue>Leukemic T-cell</tissue>
    </source>
</reference>
<reference key="6">
    <citation type="journal article" date="2010" name="Sci. Signal.">
        <title>Quantitative phosphoproteomics reveals widespread full phosphorylation site occupancy during mitosis.</title>
        <authorList>
            <person name="Olsen J.V."/>
            <person name="Vermeulen M."/>
            <person name="Santamaria A."/>
            <person name="Kumar C."/>
            <person name="Miller M.L."/>
            <person name="Jensen L.J."/>
            <person name="Gnad F."/>
            <person name="Cox J."/>
            <person name="Jensen T.S."/>
            <person name="Nigg E.A."/>
            <person name="Brunak S."/>
            <person name="Mann M."/>
        </authorList>
    </citation>
    <scope>IDENTIFICATION BY MASS SPECTROMETRY [LARGE SCALE ANALYSIS]</scope>
    <source>
        <tissue>Cervix carcinoma</tissue>
    </source>
</reference>
<reference key="7">
    <citation type="journal article" date="2013" name="J. Proteome Res.">
        <title>Toward a comprehensive characterization of a human cancer cell phosphoproteome.</title>
        <authorList>
            <person name="Zhou H."/>
            <person name="Di Palma S."/>
            <person name="Preisinger C."/>
            <person name="Peng M."/>
            <person name="Polat A.N."/>
            <person name="Heck A.J."/>
            <person name="Mohammed S."/>
        </authorList>
    </citation>
    <scope>IDENTIFICATION BY MASS SPECTROMETRY [LARGE SCALE ANALYSIS]</scope>
    <source>
        <tissue>Erythroleukemia</tissue>
    </source>
</reference>
<accession>Q9BRY0</accession>
<accession>B3KMJ3</accession>
<accession>Q8WUG1</accession>
<sequence>MVKLLVAKILCMVGVFFFMLLGSLLPVKIIETDFEKAHRSKKILSLCNTFGGGVFLATCFNALLPAVREKLQKVLSLGHISTDYPLAETILLLGFFMTVFLEQLILTFRKEKPSFIDLETFNAGSDVGSDSEYESPFMGGARGHALYVEPHGHGPSLSVQGLSRASPVRLLSLAFALSAHSVFEGLALGLQEEGEKVVSLFVGVAVHETLVAVALGISMARSAMPLRDAAKLAVTVSAMIPLGIGLGLGIESAQGVPGSVASVLLQGLAGGTFLFITFLEILAKELEEKSDRLLKVLFLVLGYTVLAGMVFLKW</sequence>